<proteinExistence type="evidence at protein level"/>
<evidence type="ECO:0000250" key="1">
    <source>
        <dbReference type="UniProtKB" id="Q15125"/>
    </source>
</evidence>
<evidence type="ECO:0000255" key="2"/>
<evidence type="ECO:0000255" key="3">
    <source>
        <dbReference type="PROSITE-ProRule" id="PRU01087"/>
    </source>
</evidence>
<evidence type="ECO:0000269" key="4">
    <source>
    </source>
</evidence>
<evidence type="ECO:0000305" key="5"/>
<evidence type="ECO:0000305" key="6">
    <source>
    </source>
</evidence>
<evidence type="ECO:0000312" key="7">
    <source>
        <dbReference type="RGD" id="620957"/>
    </source>
</evidence>
<dbReference type="EC" id="5.3.3.5" evidence="6"/>
<dbReference type="EC" id="3.3.2.11" evidence="1"/>
<dbReference type="EMBL" id="AF071501">
    <property type="protein sequence ID" value="AAF74807.1"/>
    <property type="molecule type" value="mRNA"/>
</dbReference>
<dbReference type="EMBL" id="AF318617">
    <property type="protein sequence ID" value="AAQ14592.1"/>
    <property type="molecule type" value="Genomic_DNA"/>
</dbReference>
<dbReference type="RefSeq" id="NP_476478.1">
    <property type="nucleotide sequence ID" value="NM_057137.1"/>
</dbReference>
<dbReference type="RefSeq" id="XP_006256761.1">
    <property type="nucleotide sequence ID" value="XM_006256699.5"/>
</dbReference>
<dbReference type="SMR" id="Q9JJ46"/>
<dbReference type="FunCoup" id="Q9JJ46">
    <property type="interactions" value="344"/>
</dbReference>
<dbReference type="STRING" id="10116.ENSRNOP00000007015"/>
<dbReference type="PhosphoSitePlus" id="Q9JJ46"/>
<dbReference type="PaxDb" id="10116-ENSRNOP00000007015"/>
<dbReference type="Ensembl" id="ENSRNOT00000007015.7">
    <property type="protein sequence ID" value="ENSRNOP00000007015.4"/>
    <property type="gene ID" value="ENSRNOG00000004903.7"/>
</dbReference>
<dbReference type="GeneID" id="117278"/>
<dbReference type="KEGG" id="rno:117278"/>
<dbReference type="UCSC" id="RGD:620957">
    <property type="organism name" value="rat"/>
</dbReference>
<dbReference type="AGR" id="RGD:620957"/>
<dbReference type="CTD" id="10682"/>
<dbReference type="RGD" id="620957">
    <property type="gene designation" value="Ebp"/>
</dbReference>
<dbReference type="eggNOG" id="KOG4826">
    <property type="taxonomic scope" value="Eukaryota"/>
</dbReference>
<dbReference type="GeneTree" id="ENSGT00530000063715"/>
<dbReference type="HOGENOM" id="CLU_072128_0_0_1"/>
<dbReference type="InParanoid" id="Q9JJ46"/>
<dbReference type="OMA" id="VIEGWFC"/>
<dbReference type="OrthoDB" id="58557at2759"/>
<dbReference type="PhylomeDB" id="Q9JJ46"/>
<dbReference type="TreeFam" id="TF314716"/>
<dbReference type="BRENDA" id="5.3.3.5">
    <property type="organism ID" value="5301"/>
</dbReference>
<dbReference type="Reactome" id="R-RNO-6807047">
    <property type="pathway name" value="Cholesterol biosynthesis via desmosterol"/>
</dbReference>
<dbReference type="Reactome" id="R-RNO-6807062">
    <property type="pathway name" value="Cholesterol biosynthesis via lathosterol"/>
</dbReference>
<dbReference type="SABIO-RK" id="Q9JJ46"/>
<dbReference type="UniPathway" id="UPA00063"/>
<dbReference type="PRO" id="PR:Q9JJ46"/>
<dbReference type="Proteomes" id="UP000002494">
    <property type="component" value="Chromosome X"/>
</dbReference>
<dbReference type="Bgee" id="ENSRNOG00000004903">
    <property type="expression patterns" value="Expressed in liver and 19 other cell types or tissues"/>
</dbReference>
<dbReference type="GO" id="GO:0031410">
    <property type="term" value="C:cytoplasmic vesicle"/>
    <property type="evidence" value="ECO:0007669"/>
    <property type="project" value="UniProtKB-KW"/>
</dbReference>
<dbReference type="GO" id="GO:0005783">
    <property type="term" value="C:endoplasmic reticulum"/>
    <property type="evidence" value="ECO:0000250"/>
    <property type="project" value="UniProtKB"/>
</dbReference>
<dbReference type="GO" id="GO:0005789">
    <property type="term" value="C:endoplasmic reticulum membrane"/>
    <property type="evidence" value="ECO:0007669"/>
    <property type="project" value="UniProtKB-SubCell"/>
</dbReference>
<dbReference type="GO" id="GO:0005635">
    <property type="term" value="C:nuclear envelope"/>
    <property type="evidence" value="ECO:0000250"/>
    <property type="project" value="UniProtKB"/>
</dbReference>
<dbReference type="GO" id="GO:0031965">
    <property type="term" value="C:nuclear membrane"/>
    <property type="evidence" value="ECO:0007669"/>
    <property type="project" value="Ensembl"/>
</dbReference>
<dbReference type="GO" id="GO:0000247">
    <property type="term" value="F:C-8 sterol isomerase activity"/>
    <property type="evidence" value="ECO:0000314"/>
    <property type="project" value="RGD"/>
</dbReference>
<dbReference type="GO" id="GO:0047750">
    <property type="term" value="F:cholestenol delta-isomerase activity"/>
    <property type="evidence" value="ECO:0007669"/>
    <property type="project" value="UniProtKB-EC"/>
</dbReference>
<dbReference type="GO" id="GO:0033963">
    <property type="term" value="F:cholesterol-5,6-oxide hydrolase activity"/>
    <property type="evidence" value="ECO:0000250"/>
    <property type="project" value="UniProtKB"/>
</dbReference>
<dbReference type="GO" id="GO:0042802">
    <property type="term" value="F:identical protein binding"/>
    <property type="evidence" value="ECO:0000266"/>
    <property type="project" value="RGD"/>
</dbReference>
<dbReference type="GO" id="GO:0004769">
    <property type="term" value="F:steroid Delta-isomerase activity"/>
    <property type="evidence" value="ECO:0000250"/>
    <property type="project" value="UniProtKB"/>
</dbReference>
<dbReference type="GO" id="GO:0006695">
    <property type="term" value="P:cholesterol biosynthetic process"/>
    <property type="evidence" value="ECO:0000314"/>
    <property type="project" value="RGD"/>
</dbReference>
<dbReference type="GO" id="GO:0008203">
    <property type="term" value="P:cholesterol metabolic process"/>
    <property type="evidence" value="ECO:0000266"/>
    <property type="project" value="RGD"/>
</dbReference>
<dbReference type="GO" id="GO:0030097">
    <property type="term" value="P:hemopoiesis"/>
    <property type="evidence" value="ECO:0000266"/>
    <property type="project" value="RGD"/>
</dbReference>
<dbReference type="GO" id="GO:0043931">
    <property type="term" value="P:ossification involved in bone maturation"/>
    <property type="evidence" value="ECO:0000266"/>
    <property type="project" value="RGD"/>
</dbReference>
<dbReference type="GO" id="GO:0016126">
    <property type="term" value="P:sterol biosynthetic process"/>
    <property type="evidence" value="ECO:0000266"/>
    <property type="project" value="RGD"/>
</dbReference>
<dbReference type="InterPro" id="IPR007905">
    <property type="entry name" value="EBP"/>
</dbReference>
<dbReference type="InterPro" id="IPR033118">
    <property type="entry name" value="EXPERA"/>
</dbReference>
<dbReference type="PANTHER" id="PTHR14207:SF0">
    <property type="entry name" value="3-BETA-HYDROXYSTEROID-DELTA(8),DELTA(7)-ISOMERASE"/>
    <property type="match status" value="1"/>
</dbReference>
<dbReference type="PANTHER" id="PTHR14207">
    <property type="entry name" value="STEROL ISOMERASE"/>
    <property type="match status" value="1"/>
</dbReference>
<dbReference type="Pfam" id="PF05241">
    <property type="entry name" value="EBP"/>
    <property type="match status" value="1"/>
</dbReference>
<dbReference type="PROSITE" id="PS51751">
    <property type="entry name" value="EXPERA"/>
    <property type="match status" value="1"/>
</dbReference>
<comment type="function">
    <text evidence="4">Isomerase that catalyzes the conversion of Delta(8)-sterols to their corresponding Delta(7)-isomers.</text>
</comment>
<comment type="function">
    <text evidence="1">Component of the microsomal antiestrogen binding site (AEBS), a multiproteic complex at the ER membrane that consists of an association between EBP and 7-dehydrocholesterol reductase/DHCR7. This complex is responsible for cholesterol-5,6-epoxide hydrolase (ChEH) activity, which consists in the hydration of cholesterol-5,6-epoxides (5,6-EC) into cholestane-3beta,5alpha,6beta-triol (CT). The precise role of each component of this complex has not been described yet.</text>
</comment>
<comment type="catalytic activity">
    <reaction evidence="1">
        <text>lathosterol = 5alpha-cholest-8-en-3beta-ol</text>
        <dbReference type="Rhea" id="RHEA:15281"/>
        <dbReference type="ChEBI" id="CHEBI:16608"/>
        <dbReference type="ChEBI" id="CHEBI:17168"/>
        <dbReference type="EC" id="5.3.3.5"/>
    </reaction>
    <physiologicalReaction direction="left-to-right" evidence="1">
        <dbReference type="Rhea" id="RHEA:15282"/>
    </physiologicalReaction>
</comment>
<comment type="catalytic activity">
    <reaction evidence="4">
        <text>zymosterol = 5alpha-cholesta-7,24-dien-3beta-ol</text>
        <dbReference type="Rhea" id="RHEA:33999"/>
        <dbReference type="ChEBI" id="CHEBI:16290"/>
        <dbReference type="ChEBI" id="CHEBI:18252"/>
    </reaction>
    <physiologicalReaction direction="left-to-right" evidence="6">
        <dbReference type="Rhea" id="RHEA:34000"/>
    </physiologicalReaction>
</comment>
<comment type="catalytic activity">
    <reaction evidence="1">
        <text>5,6alpha-epoxy-5alpha-cholestan-3beta-ol + H2O = 5alpha-cholestane-3beta,5,6beta-triol</text>
        <dbReference type="Rhea" id="RHEA:11964"/>
        <dbReference type="ChEBI" id="CHEBI:15377"/>
        <dbReference type="ChEBI" id="CHEBI:28082"/>
        <dbReference type="ChEBI" id="CHEBI:49305"/>
        <dbReference type="EC" id="3.3.2.11"/>
    </reaction>
    <physiologicalReaction direction="left-to-right" evidence="1">
        <dbReference type="Rhea" id="RHEA:11965"/>
    </physiologicalReaction>
</comment>
<comment type="catalytic activity">
    <reaction evidence="1">
        <text>5,6beta-epoxy-5beta-cholestan-3beta-ol + H2O = 5alpha-cholestane-3beta,5,6beta-triol</text>
        <dbReference type="Rhea" id="RHEA:15113"/>
        <dbReference type="ChEBI" id="CHEBI:15377"/>
        <dbReference type="ChEBI" id="CHEBI:28082"/>
        <dbReference type="ChEBI" id="CHEBI:28164"/>
        <dbReference type="EC" id="3.3.2.11"/>
    </reaction>
    <physiologicalReaction direction="left-to-right" evidence="1">
        <dbReference type="Rhea" id="RHEA:15114"/>
    </physiologicalReaction>
</comment>
<comment type="activity regulation">
    <text evidence="4">Enzymatic activity is induced by 25-hydroxycholesterol, cholestyramine and lovastatin.</text>
</comment>
<comment type="pathway">
    <text evidence="4">Steroid biosynthesis; cholesterol biosynthesis.</text>
</comment>
<comment type="subcellular location">
    <subcellularLocation>
        <location evidence="1">Endoplasmic reticulum membrane</location>
        <topology evidence="1">Multi-pass membrane protein</topology>
    </subcellularLocation>
    <subcellularLocation>
        <location evidence="1">Nucleus envelope</location>
    </subcellularLocation>
    <subcellularLocation>
        <location evidence="1">Cytoplasmic vesicle</location>
    </subcellularLocation>
    <text evidence="1">During interphase, detected on the endoplasmic reticulum and the nuclear envelope. During mitosis, detected on cytoplasmic vesicles.</text>
</comment>
<comment type="tissue specificity">
    <text evidence="4">Expressed in liver.</text>
</comment>
<comment type="developmental stage">
    <text evidence="4">Expression in liver is reduced by 70% in 2 years old rats compare to 3 weeks old.</text>
</comment>
<comment type="miscellaneous">
    <text>Binds to the phenylalkylamine calcium-ion antagonist emopamil, an anti-ischemic drug.</text>
</comment>
<comment type="similarity">
    <text evidence="5">Belongs to the EBP family.</text>
</comment>
<keyword id="KW-0007">Acetylation</keyword>
<keyword id="KW-0152">Cholesterol biosynthesis</keyword>
<keyword id="KW-0153">Cholesterol metabolism</keyword>
<keyword id="KW-0968">Cytoplasmic vesicle</keyword>
<keyword id="KW-0256">Endoplasmic reticulum</keyword>
<keyword id="KW-0378">Hydrolase</keyword>
<keyword id="KW-0413">Isomerase</keyword>
<keyword id="KW-0444">Lipid biosynthesis</keyword>
<keyword id="KW-0443">Lipid metabolism</keyword>
<keyword id="KW-0472">Membrane</keyword>
<keyword id="KW-0539">Nucleus</keyword>
<keyword id="KW-1185">Reference proteome</keyword>
<keyword id="KW-0752">Steroid biosynthesis</keyword>
<keyword id="KW-0753">Steroid metabolism</keyword>
<keyword id="KW-0756">Sterol biosynthesis</keyword>
<keyword id="KW-1207">Sterol metabolism</keyword>
<keyword id="KW-0812">Transmembrane</keyword>
<keyword id="KW-1133">Transmembrane helix</keyword>
<gene>
    <name evidence="7" type="primary">Ebp</name>
    <name type="synonym">Rsi</name>
</gene>
<protein>
    <recommendedName>
        <fullName evidence="5">3-beta-hydroxysteroid-Delta(8),Delta(7)-isomerase</fullName>
        <ecNumber evidence="6">5.3.3.5</ecNumber>
    </recommendedName>
    <alternativeName>
        <fullName>Cholestenol Delta-isomerase</fullName>
    </alternativeName>
    <alternativeName>
        <fullName evidence="1">Cholesterol-5,6-epoxide hydrolase subunit EBP</fullName>
        <ecNumber evidence="1">3.3.2.11</ecNumber>
    </alternativeName>
    <alternativeName>
        <fullName>Delta(8)-Delta(7) sterol isomerase</fullName>
        <shortName>D8-D7 sterol isomerase</shortName>
    </alternativeName>
    <alternativeName>
        <fullName>Emopamil-binding protein</fullName>
    </alternativeName>
    <alternativeName>
        <fullName>Sterol 8-isomerase</fullName>
    </alternativeName>
</protein>
<sequence>MTTNMLPLHPYWPRHLRLDNFVPNDLPTWHILVGLFSFSGVLIVITWLLSSRVSVVPLGTGRRLALCWFAVCTFIHLVIEGWFSFYHEILLEDQAFLSQLWKEYSKGDSRYILSDGFIVCMESVTACLWGPLSLWVVIAFLRHQPFRFVLQLVVSVGQIYGDVLYFLTELRDGFQHGELGHPLYFWFYFVIMNAIWLVIPGILVFDAIKHLTNAQSMLDNKVMKIKSKHN</sequence>
<feature type="initiator methionine" description="Removed" evidence="1">
    <location>
        <position position="1"/>
    </location>
</feature>
<feature type="chain" id="PRO_0000174344" description="3-beta-hydroxysteroid-Delta(8),Delta(7)-isomerase">
    <location>
        <begin position="2"/>
        <end position="230"/>
    </location>
</feature>
<feature type="transmembrane region" description="Helical" evidence="2">
    <location>
        <begin position="29"/>
        <end position="49"/>
    </location>
</feature>
<feature type="transmembrane region" description="Helical" evidence="2">
    <location>
        <begin position="66"/>
        <end position="86"/>
    </location>
</feature>
<feature type="transmembrane region" description="Helical" evidence="2">
    <location>
        <begin position="121"/>
        <end position="141"/>
    </location>
</feature>
<feature type="transmembrane region" description="Helical" evidence="2">
    <location>
        <begin position="185"/>
        <end position="205"/>
    </location>
</feature>
<feature type="domain" description="EXPERA" evidence="3">
    <location>
        <begin position="61"/>
        <end position="204"/>
    </location>
</feature>
<feature type="modified residue" description="N-acetylthreonine" evidence="1">
    <location>
        <position position="2"/>
    </location>
</feature>
<organism>
    <name type="scientific">Rattus norvegicus</name>
    <name type="common">Rat</name>
    <dbReference type="NCBI Taxonomy" id="10116"/>
    <lineage>
        <taxon>Eukaryota</taxon>
        <taxon>Metazoa</taxon>
        <taxon>Chordata</taxon>
        <taxon>Craniata</taxon>
        <taxon>Vertebrata</taxon>
        <taxon>Euteleostomi</taxon>
        <taxon>Mammalia</taxon>
        <taxon>Eutheria</taxon>
        <taxon>Euarchontoglires</taxon>
        <taxon>Glires</taxon>
        <taxon>Rodentia</taxon>
        <taxon>Myomorpha</taxon>
        <taxon>Muroidea</taxon>
        <taxon>Muridae</taxon>
        <taxon>Murinae</taxon>
        <taxon>Rattus</taxon>
    </lineage>
</organism>
<name>EBP_RAT</name>
<reference key="1">
    <citation type="journal article" date="2001" name="Biochem. J.">
        <title>Cholesterol biosynthesis from lanosterol: molecular cloning, chromosomal localization, functional expression and liver-specific gene regulation of rat sterol delta8-isomerase, a cholesterogenic enzyme with multiple functions.</title>
        <authorList>
            <person name="Bae S."/>
            <person name="Seong J."/>
            <person name="Paik Y."/>
        </authorList>
    </citation>
    <scope>NUCLEOTIDE SEQUENCE [MRNA]</scope>
    <scope>FUNCTION</scope>
    <scope>CATALYTIC ACTIVITY</scope>
    <scope>TISSUE SPECIFICITY</scope>
    <scope>DEVELOPMENTAL STAGE</scope>
    <scope>ACTIVITY REGULATION</scope>
</reference>
<reference key="2">
    <citation type="submission" date="2000-11" db="EMBL/GenBank/DDBJ databases">
        <title>Gene structure and analysis of promoter region of rat sterol 8-isomerase gene.</title>
        <authorList>
            <person name="Shin H.-J."/>
            <person name="Paik Y.-K."/>
        </authorList>
    </citation>
    <scope>NUCLEOTIDE SEQUENCE [GENOMIC DNA]</scope>
    <source>
        <strain>Fischer 344</strain>
        <tissue>Liver</tissue>
    </source>
</reference>
<accession>Q9JJ46</accession>
<accession>Q548M8</accession>